<keyword id="KW-1015">Disulfide bond</keyword>
<keyword id="KW-0528">Neurotoxin</keyword>
<keyword id="KW-0964">Secreted</keyword>
<keyword id="KW-0732">Signal</keyword>
<keyword id="KW-0800">Toxin</keyword>
<protein>
    <recommendedName>
        <fullName evidence="4">Putative neurotoxin 10</fullName>
    </recommendedName>
</protein>
<feature type="signal peptide" evidence="1">
    <location>
        <begin position="1"/>
        <end position="21"/>
    </location>
</feature>
<feature type="chain" id="PRO_5004777425" description="Putative neurotoxin 10">
    <location>
        <begin position="22"/>
        <end position="105"/>
    </location>
</feature>
<comment type="subcellular location">
    <subcellularLocation>
        <location evidence="3">Secreted</location>
    </subcellularLocation>
</comment>
<comment type="tissue specificity">
    <text evidence="3">Expressed by the venom gland.</text>
</comment>
<comment type="PTM">
    <text evidence="2">Contains 3 disulfide bonds.</text>
</comment>
<comment type="similarity">
    <text evidence="2">Belongs to the scolopendra neurotoxin 10 family.</text>
</comment>
<sequence>MTVSCSKVLLSLCLFLMLLKATHESNQQRTNFREFFEIQLAQETREINEKNNQPLNQQLPQLNRRKRLWRDEDRRTFCTTLCPCEDRRKRAAVTPPTRKVPCCCP</sequence>
<name>PNXAA_SCOSU</name>
<proteinExistence type="inferred from homology"/>
<accession>V9ISX2</accession>
<dbReference type="EMBL" id="JQ757082">
    <property type="protein sequence ID" value="AFM55029.1"/>
    <property type="molecule type" value="mRNA"/>
</dbReference>
<dbReference type="SMR" id="V9ISX2"/>
<dbReference type="GO" id="GO:0005576">
    <property type="term" value="C:extracellular region"/>
    <property type="evidence" value="ECO:0007669"/>
    <property type="project" value="UniProtKB-SubCell"/>
</dbReference>
<dbReference type="GO" id="GO:0090729">
    <property type="term" value="F:toxin activity"/>
    <property type="evidence" value="ECO:0007669"/>
    <property type="project" value="UniProtKB-KW"/>
</dbReference>
<organism>
    <name type="scientific">Scolopendra subspinipes</name>
    <name type="common">Vietnamese centipede</name>
    <dbReference type="NCBI Taxonomy" id="55038"/>
    <lineage>
        <taxon>Eukaryota</taxon>
        <taxon>Metazoa</taxon>
        <taxon>Ecdysozoa</taxon>
        <taxon>Arthropoda</taxon>
        <taxon>Myriapoda</taxon>
        <taxon>Chilopoda</taxon>
        <taxon>Pleurostigmophora</taxon>
        <taxon>Scolopendromorpha</taxon>
        <taxon>Scolopendridae</taxon>
        <taxon>Scolopendra</taxon>
    </lineage>
</organism>
<reference key="1">
    <citation type="submission" date="2012-03" db="EMBL/GenBank/DDBJ databases">
        <authorList>
            <person name="Lai R."/>
        </authorList>
    </citation>
    <scope>NUCLEOTIDE SEQUENCE [MRNA]</scope>
</reference>
<evidence type="ECO:0000255" key="1"/>
<evidence type="ECO:0000305" key="2"/>
<evidence type="ECO:0000305" key="3">
    <source ref="1"/>
</evidence>
<evidence type="ECO:0000312" key="4">
    <source>
        <dbReference type="EMBL" id="AFM55029.1"/>
    </source>
</evidence>